<name>NACB_COCIM</name>
<protein>
    <recommendedName>
        <fullName>Nascent polypeptide-associated complex subunit beta</fullName>
        <shortName>NAC-beta</shortName>
    </recommendedName>
    <alternativeName>
        <fullName>Beta-NAC</fullName>
    </alternativeName>
</protein>
<organism>
    <name type="scientific">Coccidioides immitis (strain RS)</name>
    <name type="common">Valley fever fungus</name>
    <dbReference type="NCBI Taxonomy" id="246410"/>
    <lineage>
        <taxon>Eukaryota</taxon>
        <taxon>Fungi</taxon>
        <taxon>Dikarya</taxon>
        <taxon>Ascomycota</taxon>
        <taxon>Pezizomycotina</taxon>
        <taxon>Eurotiomycetes</taxon>
        <taxon>Eurotiomycetidae</taxon>
        <taxon>Onygenales</taxon>
        <taxon>Onygenaceae</taxon>
        <taxon>Coccidioides</taxon>
    </lineage>
</organism>
<proteinExistence type="inferred from homology"/>
<accession>Q1DI23</accession>
<accession>J3K190</accession>
<gene>
    <name type="primary">EGD1</name>
    <name type="ORF">CIMG_10040</name>
</gene>
<dbReference type="EMBL" id="GG704915">
    <property type="protein sequence ID" value="EAS27435.3"/>
    <property type="molecule type" value="Genomic_DNA"/>
</dbReference>
<dbReference type="RefSeq" id="XP_001239018.1">
    <property type="nucleotide sequence ID" value="XM_001239017.2"/>
</dbReference>
<dbReference type="SMR" id="Q1DI23"/>
<dbReference type="FunCoup" id="Q1DI23">
    <property type="interactions" value="1192"/>
</dbReference>
<dbReference type="STRING" id="246410.Q1DI23"/>
<dbReference type="GeneID" id="4558219"/>
<dbReference type="KEGG" id="cim:CIMG_10040"/>
<dbReference type="VEuPathDB" id="FungiDB:CIMG_10040"/>
<dbReference type="InParanoid" id="Q1DI23"/>
<dbReference type="OMA" id="RMQQSVR"/>
<dbReference type="OrthoDB" id="8033832at2759"/>
<dbReference type="Proteomes" id="UP000001261">
    <property type="component" value="Unassembled WGS sequence"/>
</dbReference>
<dbReference type="GO" id="GO:0005737">
    <property type="term" value="C:cytoplasm"/>
    <property type="evidence" value="ECO:0007669"/>
    <property type="project" value="UniProtKB-SubCell"/>
</dbReference>
<dbReference type="GO" id="GO:0005634">
    <property type="term" value="C:nucleus"/>
    <property type="evidence" value="ECO:0007669"/>
    <property type="project" value="UniProtKB-SubCell"/>
</dbReference>
<dbReference type="GO" id="GO:0015031">
    <property type="term" value="P:protein transport"/>
    <property type="evidence" value="ECO:0007669"/>
    <property type="project" value="UniProtKB-KW"/>
</dbReference>
<dbReference type="CDD" id="cd22055">
    <property type="entry name" value="NAC_BTF3"/>
    <property type="match status" value="1"/>
</dbReference>
<dbReference type="FunFam" id="2.20.70.30:FF:000003">
    <property type="entry name" value="Nascent polypeptide-associated complex subunit beta"/>
    <property type="match status" value="1"/>
</dbReference>
<dbReference type="Gene3D" id="2.20.70.30">
    <property type="entry name" value="Nascent polypeptide-associated complex domain"/>
    <property type="match status" value="1"/>
</dbReference>
<dbReference type="InterPro" id="IPR039370">
    <property type="entry name" value="BTF3"/>
</dbReference>
<dbReference type="InterPro" id="IPR038187">
    <property type="entry name" value="NAC_A/B_dom_sf"/>
</dbReference>
<dbReference type="InterPro" id="IPR002715">
    <property type="entry name" value="Nas_poly-pep-assoc_cplx_dom"/>
</dbReference>
<dbReference type="PANTHER" id="PTHR10351">
    <property type="entry name" value="TRANSCRIPTION FACTOR BTF3 FAMILY MEMBER"/>
    <property type="match status" value="1"/>
</dbReference>
<dbReference type="Pfam" id="PF01849">
    <property type="entry name" value="NAC"/>
    <property type="match status" value="1"/>
</dbReference>
<dbReference type="SMART" id="SM01407">
    <property type="entry name" value="NAC"/>
    <property type="match status" value="1"/>
</dbReference>
<dbReference type="PROSITE" id="PS51151">
    <property type="entry name" value="NAC_AB"/>
    <property type="match status" value="1"/>
</dbReference>
<keyword id="KW-0963">Cytoplasm</keyword>
<keyword id="KW-0539">Nucleus</keyword>
<keyword id="KW-0653">Protein transport</keyword>
<keyword id="KW-1185">Reference proteome</keyword>
<keyword id="KW-0678">Repressor</keyword>
<keyword id="KW-0804">Transcription</keyword>
<keyword id="KW-0805">Transcription regulation</keyword>
<keyword id="KW-0813">Transport</keyword>
<evidence type="ECO:0000250" key="1"/>
<evidence type="ECO:0000255" key="2">
    <source>
        <dbReference type="PROSITE-ProRule" id="PRU00507"/>
    </source>
</evidence>
<evidence type="ECO:0000256" key="3">
    <source>
        <dbReference type="SAM" id="MobiDB-lite"/>
    </source>
</evidence>
<evidence type="ECO:0000305" key="4"/>
<sequence length="155" mass="17137">MDQAKLARLQQSVRIGTGKGTPRRKTKKVHKSSGTDDKKLQTSLKKLNVQPIQAIEEVNMFKEDGNVIHFAAPKVQASVPSNTFAIYGNGEEKELTELVPGILNQLGPDSLASLRKLAESYQNMQKKEGEAKKEGEEDDEDIPDLVGETFESKVE</sequence>
<reference key="1">
    <citation type="journal article" date="2009" name="Genome Res.">
        <title>Comparative genomic analyses of the human fungal pathogens Coccidioides and their relatives.</title>
        <authorList>
            <person name="Sharpton T.J."/>
            <person name="Stajich J.E."/>
            <person name="Rounsley S.D."/>
            <person name="Gardner M.J."/>
            <person name="Wortman J.R."/>
            <person name="Jordar V.S."/>
            <person name="Maiti R."/>
            <person name="Kodira C.D."/>
            <person name="Neafsey D.E."/>
            <person name="Zeng Q."/>
            <person name="Hung C.-Y."/>
            <person name="McMahan C."/>
            <person name="Muszewska A."/>
            <person name="Grynberg M."/>
            <person name="Mandel M.A."/>
            <person name="Kellner E.M."/>
            <person name="Barker B.M."/>
            <person name="Galgiani J.N."/>
            <person name="Orbach M.J."/>
            <person name="Kirkland T.N."/>
            <person name="Cole G.T."/>
            <person name="Henn M.R."/>
            <person name="Birren B.W."/>
            <person name="Taylor J.W."/>
        </authorList>
    </citation>
    <scope>NUCLEOTIDE SEQUENCE [LARGE SCALE GENOMIC DNA]</scope>
    <source>
        <strain>RS</strain>
    </source>
</reference>
<reference key="2">
    <citation type="journal article" date="2010" name="Genome Res.">
        <title>Population genomic sequencing of Coccidioides fungi reveals recent hybridization and transposon control.</title>
        <authorList>
            <person name="Neafsey D.E."/>
            <person name="Barker B.M."/>
            <person name="Sharpton T.J."/>
            <person name="Stajich J.E."/>
            <person name="Park D.J."/>
            <person name="Whiston E."/>
            <person name="Hung C.-Y."/>
            <person name="McMahan C."/>
            <person name="White J."/>
            <person name="Sykes S."/>
            <person name="Heiman D."/>
            <person name="Young S."/>
            <person name="Zeng Q."/>
            <person name="Abouelleil A."/>
            <person name="Aftuck L."/>
            <person name="Bessette D."/>
            <person name="Brown A."/>
            <person name="FitzGerald M."/>
            <person name="Lui A."/>
            <person name="Macdonald J.P."/>
            <person name="Priest M."/>
            <person name="Orbach M.J."/>
            <person name="Galgiani J.N."/>
            <person name="Kirkland T.N."/>
            <person name="Cole G.T."/>
            <person name="Birren B.W."/>
            <person name="Henn M.R."/>
            <person name="Taylor J.W."/>
            <person name="Rounsley S.D."/>
        </authorList>
    </citation>
    <scope>GENOME REANNOTATION</scope>
    <source>
        <strain>RS</strain>
    </source>
</reference>
<feature type="chain" id="PRO_0000273507" description="Nascent polypeptide-associated complex subunit beta">
    <location>
        <begin position="1"/>
        <end position="155"/>
    </location>
</feature>
<feature type="domain" description="NAC-A/B" evidence="2">
    <location>
        <begin position="34"/>
        <end position="99"/>
    </location>
</feature>
<feature type="region of interest" description="Disordered" evidence="3">
    <location>
        <begin position="1"/>
        <end position="39"/>
    </location>
</feature>
<feature type="region of interest" description="Disordered" evidence="3">
    <location>
        <begin position="122"/>
        <end position="155"/>
    </location>
</feature>
<feature type="compositionally biased region" description="Basic residues" evidence="3">
    <location>
        <begin position="21"/>
        <end position="31"/>
    </location>
</feature>
<feature type="compositionally biased region" description="Basic and acidic residues" evidence="3">
    <location>
        <begin position="125"/>
        <end position="135"/>
    </location>
</feature>
<comment type="function">
    <text evidence="1">Component of the nascent polypeptide-associated complex (NAC), a dynamic component of the ribosomal exit tunnel, protecting the emerging polypeptides from interaction with other cytoplasmic proteins to ensure appropriate nascent protein targeting. The NAC complex also promotes mitochondrial protein import by enhancing productive ribosome interactions with the outer mitochondrial membrane and blocks the inappropriate interaction of ribosomes translating non-secretory nascent polypeptides with translocation sites in the membrane of the endoplasmic reticulum. EGD1 may act as a transcription factor that exert a negative effect on the expression of several genes that are transcribed by RNA polymerase II.</text>
</comment>
<comment type="subunit">
    <text evidence="1">Part of the nascent polypeptide-associated complex (NAC), consisting of EGD2 and EGD1. NAC associates with ribosomes via EGD1 (By similarity).</text>
</comment>
<comment type="subcellular location">
    <subcellularLocation>
        <location evidence="1">Cytoplasm</location>
    </subcellularLocation>
    <subcellularLocation>
        <location evidence="1">Nucleus</location>
    </subcellularLocation>
    <text evidence="1">Predominantly cytoplasmic, may also transiently localize to the nucleus.</text>
</comment>
<comment type="similarity">
    <text evidence="4">Belongs to the NAC-beta family.</text>
</comment>